<sequence>MEIPIQVAVRIFPHRELKDLLRSFGPTEPKKDAQAVDEGADSKDSEAQVPAAEKDNPSISETDPNGNAEQDSAADSKTIPDANGNDSGQKDYPDSAYCVQAIPISASALGLPSALPGGDPMDSIAAGLIQVGPHTVPVTHALPSSSSQEQVYHQTVFPLITLFLEGFDASVVTYGQRGQGKSYTLYGNVQDPTLTDSTEGVVQLCVRDIFSHISLHPERTYAINVGFVEICGGDVCDLLGMGNIHCTNVDAVFHWLQVGLSARQSLPAHTLFTLTLEQQWVSKEGLLQHRLSTASFSDLCGTERCGDQPPGRPLDAGLCMLEQVISTLTDPGLMYGVNGNIPYGQTTLTTLLKDSFGGRAQTLVILCVSPLEEHLPETLGNLQFAFKVQCVRNFVIMNTYSDDNTMIVQPAEPVPESNSSAGPLSQAGPGDNFGLQFAASQWSKLVTNAEGLFSKLIDSKLITEVEKEQIEEWLFLKQECEECLSSTEAMRQQKQLVPILEAEEPEDVNSEAANSESPNSDNENDTDNESHRPDLDDKIESLMEEFRDKTDALILEKHAEYLSKHPKAVMQSQDREIEAQPPEENGDDRKVSIGSRRRSVQPGASLSTAELAMLNRVASQQPPPPIDPESVVDPLESSSGEGIRQAALAAAAATAPIEQLQKKLRKLVAEIEGKQRQLREIEETIQVKQNIIAELVKNSDTRSHAKQRFHKKRAKLEAECDKAKKQLGKALVQGRDQSEIERWTTIIGHLERRLEDLSSMKHIAGESGQKVKKLQQSVGESRKQADDLQKKLRKECKLRCQMEAELAKLRESRETGKELVKAQGSPEQQGRQLKAVQARITHLNHILREKSDNLEEQPGPEQQETLRHEIRNLRGTRDLLLEERCHLDRKLKRDKVLTQKEERKLLECDEAIEAIDAAIEFKNEMITGHRSIDTSDRIQREKGEQMLMARLNRLSTEEMRTLLYKYFTKVIDLRDSSRKLELQLVQLERERDAWEWKERVLSNAVRQARLEGERNAVLLQRQHEMKLTLMLRHMAEETSASSASYGERALAPACVAPPVQASSDFDYDHFYKGGGNPSKALIKAPKPMPTGSALDKYKDKEQRSGRNIFAKFHVLTRYASAAAAGSSGSTAEESTALIESTTTATATTTSTTTTGAVGKVKDKALVSFRPEQLKRLMPAPTATKVTRQKNKIIIQDASRRN</sequence>
<feature type="chain" id="PRO_0000307148" description="Kinesin-like protein costa">
    <location>
        <begin position="1"/>
        <end position="1201"/>
    </location>
</feature>
<feature type="domain" description="Kinesin motor" evidence="2">
    <location>
        <begin position="4"/>
        <end position="391"/>
    </location>
</feature>
<feature type="region of interest" description="Disordered" evidence="3">
    <location>
        <begin position="23"/>
        <end position="92"/>
    </location>
</feature>
<feature type="region of interest" description="Disordered" evidence="3">
    <location>
        <begin position="502"/>
        <end position="536"/>
    </location>
</feature>
<feature type="region of interest" description="Disordered" evidence="3">
    <location>
        <begin position="565"/>
        <end position="606"/>
    </location>
</feature>
<feature type="region of interest" description="Disordered" evidence="3">
    <location>
        <begin position="618"/>
        <end position="639"/>
    </location>
</feature>
<feature type="coiled-coil region" evidence="1">
    <location>
        <begin position="652"/>
        <end position="821"/>
    </location>
</feature>
<feature type="coiled-coil region" evidence="1">
    <location>
        <begin position="968"/>
        <end position="1001"/>
    </location>
</feature>
<feature type="compositionally biased region" description="Basic and acidic residues" evidence="3">
    <location>
        <begin position="28"/>
        <end position="56"/>
    </location>
</feature>
<feature type="compositionally biased region" description="Polar residues" evidence="3">
    <location>
        <begin position="57"/>
        <end position="75"/>
    </location>
</feature>
<feature type="compositionally biased region" description="Low complexity" evidence="3">
    <location>
        <begin position="510"/>
        <end position="521"/>
    </location>
</feature>
<feature type="binding site" evidence="2">
    <location>
        <begin position="175"/>
        <end position="182"/>
    </location>
    <ligand>
        <name>ATP</name>
        <dbReference type="ChEBI" id="CHEBI:30616"/>
    </ligand>
</feature>
<feature type="modified residue" description="Phosphoserine" evidence="5">
    <location>
        <position position="599"/>
    </location>
</feature>
<feature type="modified residue" description="Phosphoserine" evidence="5">
    <location>
        <position position="605"/>
    </location>
</feature>
<feature type="sequence conflict" description="In Ref. 1; AAB66813." evidence="9" ref="1">
    <original>V</original>
    <variation>L</variation>
    <location>
        <position position="7"/>
    </location>
</feature>
<feature type="sequence conflict" description="In Ref. 1; AAB66813." evidence="9" ref="1">
    <original>E</original>
    <variation>D</variation>
    <location>
        <position position="471"/>
    </location>
</feature>
<feature type="sequence conflict" description="In Ref. 5; AAT94488." evidence="9" ref="5">
    <original>A</original>
    <variation>E</variation>
    <location>
        <position position="568"/>
    </location>
</feature>
<feature type="sequence conflict" description="In Ref. 1; AAB66813." evidence="9" ref="1">
    <original>D</original>
    <variation>G</variation>
    <location>
        <position position="736"/>
    </location>
</feature>
<feature type="sequence conflict" description="In Ref. 1; AAB66813." evidence="9" ref="1">
    <original>A</original>
    <variation>V</variation>
    <location>
        <position position="807"/>
    </location>
</feature>
<name>COS_DROME</name>
<evidence type="ECO:0000255" key="1"/>
<evidence type="ECO:0000255" key="2">
    <source>
        <dbReference type="PROSITE-ProRule" id="PRU00283"/>
    </source>
</evidence>
<evidence type="ECO:0000256" key="3">
    <source>
        <dbReference type="SAM" id="MobiDB-lite"/>
    </source>
</evidence>
<evidence type="ECO:0000269" key="4">
    <source>
    </source>
</evidence>
<evidence type="ECO:0000269" key="5">
    <source>
    </source>
</evidence>
<evidence type="ECO:0000269" key="6">
    <source>
    </source>
</evidence>
<evidence type="ECO:0000269" key="7">
    <source>
    </source>
</evidence>
<evidence type="ECO:0000269" key="8">
    <source>
    </source>
</evidence>
<evidence type="ECO:0000305" key="9"/>
<gene>
    <name type="primary">cos</name>
    <name type="synonym">cos2</name>
    <name type="synonym">costal-2</name>
    <name type="ORF">CG1708</name>
</gene>
<keyword id="KW-0067">ATP-binding</keyword>
<keyword id="KW-0175">Coiled coil</keyword>
<keyword id="KW-0963">Cytoplasm</keyword>
<keyword id="KW-0206">Cytoskeleton</keyword>
<keyword id="KW-0493">Microtubule</keyword>
<keyword id="KW-0505">Motor protein</keyword>
<keyword id="KW-0547">Nucleotide-binding</keyword>
<keyword id="KW-0597">Phosphoprotein</keyword>
<keyword id="KW-1185">Reference proteome</keyword>
<keyword id="KW-0678">Repressor</keyword>
<keyword id="KW-0832">Ubl conjugation</keyword>
<accession>O16844</accession>
<accession>A1Z6X4</accession>
<accession>B5RIP3</accession>
<accession>Q6AWI9</accession>
<accession>Q8IH04</accession>
<organism>
    <name type="scientific">Drosophila melanogaster</name>
    <name type="common">Fruit fly</name>
    <dbReference type="NCBI Taxonomy" id="7227"/>
    <lineage>
        <taxon>Eukaryota</taxon>
        <taxon>Metazoa</taxon>
        <taxon>Ecdysozoa</taxon>
        <taxon>Arthropoda</taxon>
        <taxon>Hexapoda</taxon>
        <taxon>Insecta</taxon>
        <taxon>Pterygota</taxon>
        <taxon>Neoptera</taxon>
        <taxon>Endopterygota</taxon>
        <taxon>Diptera</taxon>
        <taxon>Brachycera</taxon>
        <taxon>Muscomorpha</taxon>
        <taxon>Ephydroidea</taxon>
        <taxon>Drosophilidae</taxon>
        <taxon>Drosophila</taxon>
        <taxon>Sophophora</taxon>
    </lineage>
</organism>
<comment type="function">
    <text evidence="4 6 8">Regulates cubitus interruptus (ci) processing by recruiting multiple kinases to promote its efficient phosphorylation. Scaffolds multiple kinases and ci into proximity to promote its hyperphosphorylation, which then targets it for SCFSlimb/proteasome-mediated processing to generate its repressor form. Hh signaling inhibits ci phosphorylation by interfering with the cos-ci-kinases complex formation. Negatively regulates hh-signaling pathways during various processes, including photoreceptor differentiation (PubMed:25639794, PubMed:27195754). May negatively regulate a hh-signaling pathway which functions in the intestinal immune response to bacterial uracil by activating the Duox-dependent production of reactive oxygen species (ROS) (PubMed:25639794).</text>
</comment>
<comment type="subunit">
    <text evidence="4 8 9">Homodimer (Potential). Binds microtubules. Interacts with ci, smo, sgg, CkIalpha and protein kinase A catalytic subunit (PubMed:15691767, PubMed:9244298). Interacts (via kinesin motor domain) with Ubr3 (PubMed:27195754).</text>
</comment>
<comment type="interaction">
    <interactant intactId="EBI-102069">
        <id>O16844</id>
    </interactant>
    <interactant intactId="EBI-94976">
        <id>P19538</id>
        <label>ci</label>
    </interactant>
    <organismsDiffer>false</organismsDiffer>
    <experiments>12</experiments>
</comment>
<comment type="interaction">
    <interactant intactId="EBI-102069">
        <id>O16844</id>
    </interactant>
    <interactant intactId="EBI-165536">
        <id>P23647</id>
        <label>fu</label>
    </interactant>
    <organismsDiffer>false</organismsDiffer>
    <experiments>7</experiments>
</comment>
<comment type="interaction">
    <interactant intactId="EBI-102069">
        <id>O16844</id>
    </interactant>
    <interactant intactId="EBI-142245">
        <id>P91682</id>
        <label>smo</label>
    </interactant>
    <organismsDiffer>false</organismsDiffer>
    <experiments>6</experiments>
</comment>
<comment type="subcellular location">
    <subcellularLocation>
        <location evidence="8">Cytoplasm</location>
        <location evidence="8">Cytoskeleton</location>
    </subcellularLocation>
</comment>
<comment type="developmental stage">
    <text evidence="8">Present at high levels during the first 4 hours of embryogenesis and at moderate levels between 4-12 hours.</text>
</comment>
<comment type="PTM">
    <text evidence="7">Polyubiquitinated by Ubr3, which leads to proteasomal degradation.</text>
</comment>
<comment type="disruption phenotype">
    <text evidence="6">RNAi-mediated knockdown results in the increased expression of reactive oxygen species (ROS) in the gut of 7 day old conventionally reared adult flies. No increased ROS expression in germ-free adults and in response to bacteria-derived uracil.</text>
</comment>
<comment type="similarity">
    <text evidence="2">Belongs to the TRAFAC class myosin-kinesin ATPase superfamily. Kinesin family. KIF27 subfamily.</text>
</comment>
<comment type="sequence caution" evidence="9">
    <conflict type="frameshift">
        <sequence resource="EMBL-CDS" id="AAN71259"/>
    </conflict>
</comment>
<proteinExistence type="evidence at protein level"/>
<reference key="1">
    <citation type="journal article" date="1997" name="Cell">
        <title>Costal2, a novel kinesin-related protein in the Hedgehog signaling pathway.</title>
        <authorList>
            <person name="Sisson J.C."/>
            <person name="Ho K.S."/>
            <person name="Suyama K."/>
            <person name="Scott M.P."/>
        </authorList>
    </citation>
    <scope>NUCLEOTIDE SEQUENCE [MRNA]</scope>
    <scope>FUNCTION</scope>
    <scope>SUBCELLULAR LOCATION</scope>
    <scope>SUBUNIT</scope>
    <scope>DEVELOPMENTAL STAGE</scope>
    <scope>INTERACTION WITH CI</scope>
</reference>
<reference key="2">
    <citation type="journal article" date="2000" name="Science">
        <title>The genome sequence of Drosophila melanogaster.</title>
        <authorList>
            <person name="Adams M.D."/>
            <person name="Celniker S.E."/>
            <person name="Holt R.A."/>
            <person name="Evans C.A."/>
            <person name="Gocayne J.D."/>
            <person name="Amanatides P.G."/>
            <person name="Scherer S.E."/>
            <person name="Li P.W."/>
            <person name="Hoskins R.A."/>
            <person name="Galle R.F."/>
            <person name="George R.A."/>
            <person name="Lewis S.E."/>
            <person name="Richards S."/>
            <person name="Ashburner M."/>
            <person name="Henderson S.N."/>
            <person name="Sutton G.G."/>
            <person name="Wortman J.R."/>
            <person name="Yandell M.D."/>
            <person name="Zhang Q."/>
            <person name="Chen L.X."/>
            <person name="Brandon R.C."/>
            <person name="Rogers Y.-H.C."/>
            <person name="Blazej R.G."/>
            <person name="Champe M."/>
            <person name="Pfeiffer B.D."/>
            <person name="Wan K.H."/>
            <person name="Doyle C."/>
            <person name="Baxter E.G."/>
            <person name="Helt G."/>
            <person name="Nelson C.R."/>
            <person name="Miklos G.L.G."/>
            <person name="Abril J.F."/>
            <person name="Agbayani A."/>
            <person name="An H.-J."/>
            <person name="Andrews-Pfannkoch C."/>
            <person name="Baldwin D."/>
            <person name="Ballew R.M."/>
            <person name="Basu A."/>
            <person name="Baxendale J."/>
            <person name="Bayraktaroglu L."/>
            <person name="Beasley E.M."/>
            <person name="Beeson K.Y."/>
            <person name="Benos P.V."/>
            <person name="Berman B.P."/>
            <person name="Bhandari D."/>
            <person name="Bolshakov S."/>
            <person name="Borkova D."/>
            <person name="Botchan M.R."/>
            <person name="Bouck J."/>
            <person name="Brokstein P."/>
            <person name="Brottier P."/>
            <person name="Burtis K.C."/>
            <person name="Busam D.A."/>
            <person name="Butler H."/>
            <person name="Cadieu E."/>
            <person name="Center A."/>
            <person name="Chandra I."/>
            <person name="Cherry J.M."/>
            <person name="Cawley S."/>
            <person name="Dahlke C."/>
            <person name="Davenport L.B."/>
            <person name="Davies P."/>
            <person name="de Pablos B."/>
            <person name="Delcher A."/>
            <person name="Deng Z."/>
            <person name="Mays A.D."/>
            <person name="Dew I."/>
            <person name="Dietz S.M."/>
            <person name="Dodson K."/>
            <person name="Doup L.E."/>
            <person name="Downes M."/>
            <person name="Dugan-Rocha S."/>
            <person name="Dunkov B.C."/>
            <person name="Dunn P."/>
            <person name="Durbin K.J."/>
            <person name="Evangelista C.C."/>
            <person name="Ferraz C."/>
            <person name="Ferriera S."/>
            <person name="Fleischmann W."/>
            <person name="Fosler C."/>
            <person name="Gabrielian A.E."/>
            <person name="Garg N.S."/>
            <person name="Gelbart W.M."/>
            <person name="Glasser K."/>
            <person name="Glodek A."/>
            <person name="Gong F."/>
            <person name="Gorrell J.H."/>
            <person name="Gu Z."/>
            <person name="Guan P."/>
            <person name="Harris M."/>
            <person name="Harris N.L."/>
            <person name="Harvey D.A."/>
            <person name="Heiman T.J."/>
            <person name="Hernandez J.R."/>
            <person name="Houck J."/>
            <person name="Hostin D."/>
            <person name="Houston K.A."/>
            <person name="Howland T.J."/>
            <person name="Wei M.-H."/>
            <person name="Ibegwam C."/>
            <person name="Jalali M."/>
            <person name="Kalush F."/>
            <person name="Karpen G.H."/>
            <person name="Ke Z."/>
            <person name="Kennison J.A."/>
            <person name="Ketchum K.A."/>
            <person name="Kimmel B.E."/>
            <person name="Kodira C.D."/>
            <person name="Kraft C.L."/>
            <person name="Kravitz S."/>
            <person name="Kulp D."/>
            <person name="Lai Z."/>
            <person name="Lasko P."/>
            <person name="Lei Y."/>
            <person name="Levitsky A.A."/>
            <person name="Li J.H."/>
            <person name="Li Z."/>
            <person name="Liang Y."/>
            <person name="Lin X."/>
            <person name="Liu X."/>
            <person name="Mattei B."/>
            <person name="McIntosh T.C."/>
            <person name="McLeod M.P."/>
            <person name="McPherson D."/>
            <person name="Merkulov G."/>
            <person name="Milshina N.V."/>
            <person name="Mobarry C."/>
            <person name="Morris J."/>
            <person name="Moshrefi A."/>
            <person name="Mount S.M."/>
            <person name="Moy M."/>
            <person name="Murphy B."/>
            <person name="Murphy L."/>
            <person name="Muzny D.M."/>
            <person name="Nelson D.L."/>
            <person name="Nelson D.R."/>
            <person name="Nelson K.A."/>
            <person name="Nixon K."/>
            <person name="Nusskern D.R."/>
            <person name="Pacleb J.M."/>
            <person name="Palazzolo M."/>
            <person name="Pittman G.S."/>
            <person name="Pan S."/>
            <person name="Pollard J."/>
            <person name="Puri V."/>
            <person name="Reese M.G."/>
            <person name="Reinert K."/>
            <person name="Remington K."/>
            <person name="Saunders R.D.C."/>
            <person name="Scheeler F."/>
            <person name="Shen H."/>
            <person name="Shue B.C."/>
            <person name="Siden-Kiamos I."/>
            <person name="Simpson M."/>
            <person name="Skupski M.P."/>
            <person name="Smith T.J."/>
            <person name="Spier E."/>
            <person name="Spradling A.C."/>
            <person name="Stapleton M."/>
            <person name="Strong R."/>
            <person name="Sun E."/>
            <person name="Svirskas R."/>
            <person name="Tector C."/>
            <person name="Turner R."/>
            <person name="Venter E."/>
            <person name="Wang A.H."/>
            <person name="Wang X."/>
            <person name="Wang Z.-Y."/>
            <person name="Wassarman D.A."/>
            <person name="Weinstock G.M."/>
            <person name="Weissenbach J."/>
            <person name="Williams S.M."/>
            <person name="Woodage T."/>
            <person name="Worley K.C."/>
            <person name="Wu D."/>
            <person name="Yang S."/>
            <person name="Yao Q.A."/>
            <person name="Ye J."/>
            <person name="Yeh R.-F."/>
            <person name="Zaveri J.S."/>
            <person name="Zhan M."/>
            <person name="Zhang G."/>
            <person name="Zhao Q."/>
            <person name="Zheng L."/>
            <person name="Zheng X.H."/>
            <person name="Zhong F.N."/>
            <person name="Zhong W."/>
            <person name="Zhou X."/>
            <person name="Zhu S.C."/>
            <person name="Zhu X."/>
            <person name="Smith H.O."/>
            <person name="Gibbs R.A."/>
            <person name="Myers E.W."/>
            <person name="Rubin G.M."/>
            <person name="Venter J.C."/>
        </authorList>
    </citation>
    <scope>NUCLEOTIDE SEQUENCE [LARGE SCALE GENOMIC DNA]</scope>
    <source>
        <strain>Berkeley</strain>
    </source>
</reference>
<reference key="3">
    <citation type="journal article" date="2002" name="Genome Biol.">
        <title>Annotation of the Drosophila melanogaster euchromatic genome: a systematic review.</title>
        <authorList>
            <person name="Misra S."/>
            <person name="Crosby M.A."/>
            <person name="Mungall C.J."/>
            <person name="Matthews B.B."/>
            <person name="Campbell K.S."/>
            <person name="Hradecky P."/>
            <person name="Huang Y."/>
            <person name="Kaminker J.S."/>
            <person name="Millburn G.H."/>
            <person name="Prochnik S.E."/>
            <person name="Smith C.D."/>
            <person name="Tupy J.L."/>
            <person name="Whitfield E.J."/>
            <person name="Bayraktaroglu L."/>
            <person name="Berman B.P."/>
            <person name="Bettencourt B.R."/>
            <person name="Celniker S.E."/>
            <person name="de Grey A.D.N.J."/>
            <person name="Drysdale R.A."/>
            <person name="Harris N.L."/>
            <person name="Richter J."/>
            <person name="Russo S."/>
            <person name="Schroeder A.J."/>
            <person name="Shu S.Q."/>
            <person name="Stapleton M."/>
            <person name="Yamada C."/>
            <person name="Ashburner M."/>
            <person name="Gelbart W.M."/>
            <person name="Rubin G.M."/>
            <person name="Lewis S.E."/>
        </authorList>
    </citation>
    <scope>GENOME REANNOTATION</scope>
    <source>
        <strain>Berkeley</strain>
    </source>
</reference>
<reference key="4">
    <citation type="journal article" date="2002" name="Genome Biol.">
        <title>A Drosophila full-length cDNA resource.</title>
        <authorList>
            <person name="Stapleton M."/>
            <person name="Carlson J.W."/>
            <person name="Brokstein P."/>
            <person name="Yu C."/>
            <person name="Champe M."/>
            <person name="George R.A."/>
            <person name="Guarin H."/>
            <person name="Kronmiller B."/>
            <person name="Pacleb J.M."/>
            <person name="Park S."/>
            <person name="Wan K.H."/>
            <person name="Rubin G.M."/>
            <person name="Celniker S.E."/>
        </authorList>
    </citation>
    <scope>NUCLEOTIDE SEQUENCE [LARGE SCALE MRNA]</scope>
    <source>
        <strain>Berkeley</strain>
        <tissue>Embryo</tissue>
    </source>
</reference>
<reference key="5">
    <citation type="submission" date="2008-09" db="EMBL/GenBank/DDBJ databases">
        <authorList>
            <person name="Stapleton M."/>
            <person name="Carlson J.W."/>
            <person name="Booth B."/>
            <person name="Chavez C."/>
            <person name="Frise E."/>
            <person name="George R.A."/>
            <person name="Pacleb J.M."/>
            <person name="Park S."/>
            <person name="Wan K.H."/>
            <person name="Yu C."/>
            <person name="Rubin G.M."/>
            <person name="Celniker S.E."/>
        </authorList>
    </citation>
    <scope>NUCLEOTIDE SEQUENCE [LARGE SCALE MRNA]</scope>
    <source>
        <strain>Berkeley</strain>
        <tissue>Embryo</tissue>
    </source>
</reference>
<reference key="6">
    <citation type="journal article" date="2005" name="Dev. Cell">
        <title>Hedgehog-regulated Costal2-kinase complexes control phosphorylation and proteolytic processing of Cubitus interruptus.</title>
        <authorList>
            <person name="Zhang W."/>
            <person name="Zhao Y."/>
            <person name="Tong C."/>
            <person name="Wang G."/>
            <person name="Wang B."/>
            <person name="Jia J."/>
            <person name="Jiang J."/>
        </authorList>
    </citation>
    <scope>FUNCTION</scope>
    <scope>INTERACTION WITH SMO; SGG; CKI ALPHA AND PROTEIN KINASE A CATALYTIC SUBUNIT</scope>
</reference>
<reference key="7">
    <citation type="journal article" date="2008" name="J. Proteome Res.">
        <title>Phosphoproteome analysis of Drosophila melanogaster embryos.</title>
        <authorList>
            <person name="Zhai B."/>
            <person name="Villen J."/>
            <person name="Beausoleil S.A."/>
            <person name="Mintseris J."/>
            <person name="Gygi S.P."/>
        </authorList>
    </citation>
    <scope>PHOSPHORYLATION [LARGE SCALE ANALYSIS] AT SER-599 AND SER-605</scope>
    <scope>IDENTIFICATION BY MASS SPECTROMETRY</scope>
    <source>
        <tissue>Embryo</tissue>
    </source>
</reference>
<reference key="8">
    <citation type="journal article" date="2015" name="Cell Host Microbe">
        <title>Bacterial uracil modulates Drosophila DUOX-dependent gut immunity via Hedgehog-induced signaling endosomes.</title>
        <authorList>
            <person name="Lee K.A."/>
            <person name="Kim B."/>
            <person name="Bhin J."/>
            <person name="Kim D.H."/>
            <person name="You H."/>
            <person name="Kim E.K."/>
            <person name="Kim S.H."/>
            <person name="Ryu J.H."/>
            <person name="Hwang D."/>
            <person name="Lee W.J."/>
        </authorList>
    </citation>
    <scope>FUNCTION</scope>
    <scope>DISRUPTION PHENOTYPE</scope>
</reference>
<reference key="9">
    <citation type="journal article" date="2016" name="PLoS Genet.">
        <title>Ubr3, a Novel Modulator of Hh Signaling Affects the Degradation of Costal-2 and Kif7 through Poly-ubiquitination.</title>
        <authorList>
            <person name="Li T."/>
            <person name="Fan J."/>
            <person name="Blanco-Sanchez B."/>
            <person name="Giagtzoglou N."/>
            <person name="Lin G."/>
            <person name="Yamamoto S."/>
            <person name="Jaiswal M."/>
            <person name="Chen K."/>
            <person name="Zhang J."/>
            <person name="Wei W."/>
            <person name="Lewis M.T."/>
            <person name="Groves A.K."/>
            <person name="Westerfield M."/>
            <person name="Jia J."/>
            <person name="Bellen H.J."/>
        </authorList>
    </citation>
    <scope>FUNCTION</scope>
    <scope>INTERACTION WITH UBR3</scope>
    <scope>UBIQUITINATION</scope>
</reference>
<protein>
    <recommendedName>
        <fullName>Kinesin-like protein costa</fullName>
    </recommendedName>
    <alternativeName>
        <fullName>Kinesin-like protein costal2</fullName>
    </alternativeName>
</protein>
<dbReference type="EMBL" id="AF019250">
    <property type="protein sequence ID" value="AAB66813.1"/>
    <property type="molecule type" value="mRNA"/>
</dbReference>
<dbReference type="EMBL" id="AE013599">
    <property type="protein sequence ID" value="AAF59270.1"/>
    <property type="molecule type" value="Genomic_DNA"/>
</dbReference>
<dbReference type="EMBL" id="BT001504">
    <property type="protein sequence ID" value="AAN71259.1"/>
    <property type="status" value="ALT_FRAME"/>
    <property type="molecule type" value="mRNA"/>
</dbReference>
<dbReference type="EMBL" id="BT015259">
    <property type="protein sequence ID" value="AAT94488.1"/>
    <property type="molecule type" value="mRNA"/>
</dbReference>
<dbReference type="EMBL" id="BT044167">
    <property type="protein sequence ID" value="ACH92232.1"/>
    <property type="molecule type" value="mRNA"/>
</dbReference>
<dbReference type="PIR" id="T08603">
    <property type="entry name" value="T08603"/>
</dbReference>
<dbReference type="RefSeq" id="NP_001260765.1">
    <property type="nucleotide sequence ID" value="NM_001273836.1"/>
</dbReference>
<dbReference type="RefSeq" id="NP_477092.1">
    <property type="nucleotide sequence ID" value="NM_057744.3"/>
</dbReference>
<dbReference type="SMR" id="O16844"/>
<dbReference type="BioGRID" id="61534">
    <property type="interactions" value="31"/>
</dbReference>
<dbReference type="ComplexPortal" id="CPX-2700">
    <property type="entry name" value="Hedgehog signalling complex"/>
</dbReference>
<dbReference type="DIP" id="DIP-22550N"/>
<dbReference type="FunCoup" id="O16844">
    <property type="interactions" value="73"/>
</dbReference>
<dbReference type="IntAct" id="O16844">
    <property type="interactions" value="11"/>
</dbReference>
<dbReference type="STRING" id="7227.FBpp0088087"/>
<dbReference type="iPTMnet" id="O16844"/>
<dbReference type="PaxDb" id="7227-FBpp0088087"/>
<dbReference type="DNASU" id="35653"/>
<dbReference type="EnsemblMetazoa" id="FBtr0089015">
    <property type="protein sequence ID" value="FBpp0088087"/>
    <property type="gene ID" value="FBgn0000352"/>
</dbReference>
<dbReference type="EnsemblMetazoa" id="FBtr0336916">
    <property type="protein sequence ID" value="FBpp0307854"/>
    <property type="gene ID" value="FBgn0000352"/>
</dbReference>
<dbReference type="GeneID" id="35653"/>
<dbReference type="KEGG" id="dme:Dmel_CG1708"/>
<dbReference type="AGR" id="FB:FBgn0000352"/>
<dbReference type="CTD" id="35653"/>
<dbReference type="FlyBase" id="FBgn0000352">
    <property type="gene designation" value="cos"/>
</dbReference>
<dbReference type="VEuPathDB" id="VectorBase:FBgn0000352"/>
<dbReference type="eggNOG" id="ENOG502QUYG">
    <property type="taxonomic scope" value="Eukaryota"/>
</dbReference>
<dbReference type="GeneTree" id="ENSGT00940000169432"/>
<dbReference type="HOGENOM" id="CLU_010897_0_0_1"/>
<dbReference type="InParanoid" id="O16844"/>
<dbReference type="OMA" id="YVIMNTF"/>
<dbReference type="OrthoDB" id="540783at2759"/>
<dbReference type="PhylomeDB" id="O16844"/>
<dbReference type="Reactome" id="R-DME-209159">
    <property type="pathway name" value="Assembly of the CI containing complexes"/>
</dbReference>
<dbReference type="Reactome" id="R-DME-209190">
    <property type="pathway name" value="Phosphorylation of CI"/>
</dbReference>
<dbReference type="Reactome" id="R-DME-209214">
    <property type="pathway name" value="Phosphorylation of SMO"/>
</dbReference>
<dbReference type="Reactome" id="R-DME-209338">
    <property type="pathway name" value="Assembly of the 'signalling complexes'"/>
</dbReference>
<dbReference type="Reactome" id="R-DME-209360">
    <property type="pathway name" value="Ubiquitination and proteolysis of phosphorylated CI"/>
</dbReference>
<dbReference type="Reactome" id="R-DME-216119">
    <property type="pathway name" value="Activation of CI"/>
</dbReference>
<dbReference type="Reactome" id="R-DME-216217">
    <property type="pathway name" value="Activation of SMO"/>
</dbReference>
<dbReference type="SignaLink" id="O16844"/>
<dbReference type="BioGRID-ORCS" id="35653">
    <property type="hits" value="0 hits in 3 CRISPR screens"/>
</dbReference>
<dbReference type="GenomeRNAi" id="35653"/>
<dbReference type="PRO" id="PR:O16844"/>
<dbReference type="Proteomes" id="UP000000803">
    <property type="component" value="Chromosome 2R"/>
</dbReference>
<dbReference type="Bgee" id="FBgn0000352">
    <property type="expression patterns" value="Expressed in eye disc (Drosophila) and 48 other cell types or tissues"/>
</dbReference>
<dbReference type="ExpressionAtlas" id="O16844">
    <property type="expression patterns" value="baseline and differential"/>
</dbReference>
<dbReference type="GO" id="GO:0005929">
    <property type="term" value="C:cilium"/>
    <property type="evidence" value="ECO:0007669"/>
    <property type="project" value="GOC"/>
</dbReference>
<dbReference type="GO" id="GO:0005737">
    <property type="term" value="C:cytoplasm"/>
    <property type="evidence" value="ECO:0000318"/>
    <property type="project" value="GO_Central"/>
</dbReference>
<dbReference type="GO" id="GO:0005829">
    <property type="term" value="C:cytosol"/>
    <property type="evidence" value="ECO:0000314"/>
    <property type="project" value="FlyBase"/>
</dbReference>
<dbReference type="GO" id="GO:0035301">
    <property type="term" value="C:Hedgehog signaling complex"/>
    <property type="evidence" value="ECO:0000353"/>
    <property type="project" value="FlyBase"/>
</dbReference>
<dbReference type="GO" id="GO:0005871">
    <property type="term" value="C:kinesin complex"/>
    <property type="evidence" value="ECO:0000250"/>
    <property type="project" value="FlyBase"/>
</dbReference>
<dbReference type="GO" id="GO:0005874">
    <property type="term" value="C:microtubule"/>
    <property type="evidence" value="ECO:0000318"/>
    <property type="project" value="GO_Central"/>
</dbReference>
<dbReference type="GO" id="GO:0005875">
    <property type="term" value="C:microtubule associated complex"/>
    <property type="evidence" value="ECO:0000353"/>
    <property type="project" value="FlyBase"/>
</dbReference>
<dbReference type="GO" id="GO:0005524">
    <property type="term" value="F:ATP binding"/>
    <property type="evidence" value="ECO:0007669"/>
    <property type="project" value="UniProtKB-KW"/>
</dbReference>
<dbReference type="GO" id="GO:0016887">
    <property type="term" value="F:ATP hydrolysis activity"/>
    <property type="evidence" value="ECO:0000318"/>
    <property type="project" value="GO_Central"/>
</dbReference>
<dbReference type="GO" id="GO:0003774">
    <property type="term" value="F:cytoskeletal motor activity"/>
    <property type="evidence" value="ECO:0000250"/>
    <property type="project" value="FlyBase"/>
</dbReference>
<dbReference type="GO" id="GO:0008017">
    <property type="term" value="F:microtubule binding"/>
    <property type="evidence" value="ECO:0000314"/>
    <property type="project" value="FlyBase"/>
</dbReference>
<dbReference type="GO" id="GO:0003777">
    <property type="term" value="F:microtubule motor activity"/>
    <property type="evidence" value="ECO:0000318"/>
    <property type="project" value="GO_Central"/>
</dbReference>
<dbReference type="GO" id="GO:0140313">
    <property type="term" value="F:molecular sequestering activity"/>
    <property type="evidence" value="ECO:0000315"/>
    <property type="project" value="FlyBase"/>
</dbReference>
<dbReference type="GO" id="GO:0019901">
    <property type="term" value="F:protein kinase binding"/>
    <property type="evidence" value="ECO:0000353"/>
    <property type="project" value="FlyBase"/>
</dbReference>
<dbReference type="GO" id="GO:0061629">
    <property type="term" value="F:RNA polymerase II-specific DNA-binding transcription factor binding"/>
    <property type="evidence" value="ECO:0000353"/>
    <property type="project" value="FlyBase"/>
</dbReference>
<dbReference type="GO" id="GO:0035591">
    <property type="term" value="F:signaling adaptor activity"/>
    <property type="evidence" value="ECO:0000314"/>
    <property type="project" value="FlyBase"/>
</dbReference>
<dbReference type="GO" id="GO:0005119">
    <property type="term" value="F:smoothened binding"/>
    <property type="evidence" value="ECO:0000353"/>
    <property type="project" value="FlyBase"/>
</dbReference>
<dbReference type="GO" id="GO:0031625">
    <property type="term" value="F:ubiquitin protein ligase binding"/>
    <property type="evidence" value="ECO:0000353"/>
    <property type="project" value="FlyBase"/>
</dbReference>
<dbReference type="GO" id="GO:0030707">
    <property type="term" value="P:follicle cell of egg chamber development"/>
    <property type="evidence" value="ECO:0000315"/>
    <property type="project" value="FlyBase"/>
</dbReference>
<dbReference type="GO" id="GO:0007476">
    <property type="term" value="P:imaginal disc-derived wing morphogenesis"/>
    <property type="evidence" value="ECO:0000315"/>
    <property type="project" value="FlyBase"/>
</dbReference>
<dbReference type="GO" id="GO:0042073">
    <property type="term" value="P:intraciliary transport"/>
    <property type="evidence" value="ECO:0000315"/>
    <property type="project" value="FlyBase"/>
</dbReference>
<dbReference type="GO" id="GO:0007018">
    <property type="term" value="P:microtubule-based movement"/>
    <property type="evidence" value="ECO:0000318"/>
    <property type="project" value="GO_Central"/>
</dbReference>
<dbReference type="GO" id="GO:0045879">
    <property type="term" value="P:negative regulation of smoothened signaling pathway"/>
    <property type="evidence" value="ECO:0000314"/>
    <property type="project" value="FlyBase"/>
</dbReference>
<dbReference type="GO" id="GO:0042981">
    <property type="term" value="P:regulation of apoptotic process"/>
    <property type="evidence" value="ECO:0000316"/>
    <property type="project" value="FlyBase"/>
</dbReference>
<dbReference type="GO" id="GO:0007224">
    <property type="term" value="P:smoothened signaling pathway"/>
    <property type="evidence" value="ECO:0000314"/>
    <property type="project" value="FlyBase"/>
</dbReference>
<dbReference type="FunFam" id="3.40.850.10:FF:000151">
    <property type="entry name" value="Kinesin-like protein costa"/>
    <property type="match status" value="1"/>
</dbReference>
<dbReference type="FunFam" id="3.40.850.10:FF:000218">
    <property type="entry name" value="Kinesin-like protein costa"/>
    <property type="match status" value="1"/>
</dbReference>
<dbReference type="Gene3D" id="3.40.850.10">
    <property type="entry name" value="Kinesin motor domain"/>
    <property type="match status" value="2"/>
</dbReference>
<dbReference type="InterPro" id="IPR027640">
    <property type="entry name" value="Kinesin-like_fam"/>
</dbReference>
<dbReference type="InterPro" id="IPR001752">
    <property type="entry name" value="Kinesin_motor_dom"/>
</dbReference>
<dbReference type="InterPro" id="IPR036961">
    <property type="entry name" value="Kinesin_motor_dom_sf"/>
</dbReference>
<dbReference type="InterPro" id="IPR027417">
    <property type="entry name" value="P-loop_NTPase"/>
</dbReference>
<dbReference type="PANTHER" id="PTHR47969">
    <property type="entry name" value="CHROMOSOME-ASSOCIATED KINESIN KIF4A-RELATED"/>
    <property type="match status" value="1"/>
</dbReference>
<dbReference type="PANTHER" id="PTHR47969:SF15">
    <property type="entry name" value="CHROMOSOME-ASSOCIATED KINESIN KIF4A-RELATED"/>
    <property type="match status" value="1"/>
</dbReference>
<dbReference type="Pfam" id="PF00225">
    <property type="entry name" value="Kinesin"/>
    <property type="match status" value="2"/>
</dbReference>
<dbReference type="PRINTS" id="PR00380">
    <property type="entry name" value="KINESINHEAVY"/>
</dbReference>
<dbReference type="SMART" id="SM00129">
    <property type="entry name" value="KISc"/>
    <property type="match status" value="1"/>
</dbReference>
<dbReference type="SUPFAM" id="SSF52540">
    <property type="entry name" value="P-loop containing nucleoside triphosphate hydrolases"/>
    <property type="match status" value="1"/>
</dbReference>
<dbReference type="PROSITE" id="PS50067">
    <property type="entry name" value="KINESIN_MOTOR_2"/>
    <property type="match status" value="1"/>
</dbReference>